<dbReference type="EC" id="6.3.4.19" evidence="1"/>
<dbReference type="EMBL" id="AE017354">
    <property type="protein sequence ID" value="AAU26875.1"/>
    <property type="molecule type" value="Genomic_DNA"/>
</dbReference>
<dbReference type="RefSeq" id="YP_094822.1">
    <property type="nucleotide sequence ID" value="NC_002942.5"/>
</dbReference>
<dbReference type="SMR" id="Q5ZXE5"/>
<dbReference type="STRING" id="272624.lpg0786"/>
<dbReference type="PaxDb" id="272624-lpg0786"/>
<dbReference type="KEGG" id="lpn:lpg0786"/>
<dbReference type="PATRIC" id="fig|272624.6.peg.813"/>
<dbReference type="eggNOG" id="COG0037">
    <property type="taxonomic scope" value="Bacteria"/>
</dbReference>
<dbReference type="HOGENOM" id="CLU_018869_2_0_6"/>
<dbReference type="OrthoDB" id="9807403at2"/>
<dbReference type="Proteomes" id="UP000000609">
    <property type="component" value="Chromosome"/>
</dbReference>
<dbReference type="GO" id="GO:0005737">
    <property type="term" value="C:cytoplasm"/>
    <property type="evidence" value="ECO:0007669"/>
    <property type="project" value="UniProtKB-SubCell"/>
</dbReference>
<dbReference type="GO" id="GO:0005524">
    <property type="term" value="F:ATP binding"/>
    <property type="evidence" value="ECO:0007669"/>
    <property type="project" value="UniProtKB-UniRule"/>
</dbReference>
<dbReference type="GO" id="GO:0032267">
    <property type="term" value="F:tRNA(Ile)-lysidine synthase activity"/>
    <property type="evidence" value="ECO:0007669"/>
    <property type="project" value="UniProtKB-EC"/>
</dbReference>
<dbReference type="GO" id="GO:0006400">
    <property type="term" value="P:tRNA modification"/>
    <property type="evidence" value="ECO:0007669"/>
    <property type="project" value="UniProtKB-UniRule"/>
</dbReference>
<dbReference type="CDD" id="cd01992">
    <property type="entry name" value="TilS_N"/>
    <property type="match status" value="1"/>
</dbReference>
<dbReference type="Gene3D" id="1.20.59.20">
    <property type="match status" value="1"/>
</dbReference>
<dbReference type="Gene3D" id="3.40.50.620">
    <property type="entry name" value="HUPs"/>
    <property type="match status" value="1"/>
</dbReference>
<dbReference type="HAMAP" id="MF_01161">
    <property type="entry name" value="tRNA_Ile_lys_synt"/>
    <property type="match status" value="1"/>
</dbReference>
<dbReference type="InterPro" id="IPR012796">
    <property type="entry name" value="Lysidine-tRNA-synth_C"/>
</dbReference>
<dbReference type="InterPro" id="IPR014729">
    <property type="entry name" value="Rossmann-like_a/b/a_fold"/>
</dbReference>
<dbReference type="InterPro" id="IPR011063">
    <property type="entry name" value="TilS/TtcA_N"/>
</dbReference>
<dbReference type="InterPro" id="IPR012094">
    <property type="entry name" value="tRNA_Ile_lys_synt"/>
</dbReference>
<dbReference type="InterPro" id="IPR012795">
    <property type="entry name" value="tRNA_Ile_lys_synt_N"/>
</dbReference>
<dbReference type="InterPro" id="IPR015262">
    <property type="entry name" value="tRNA_Ile_lys_synt_subst-bd"/>
</dbReference>
<dbReference type="NCBIfam" id="TIGR02433">
    <property type="entry name" value="lysidine_TilS_C"/>
    <property type="match status" value="1"/>
</dbReference>
<dbReference type="NCBIfam" id="TIGR02432">
    <property type="entry name" value="lysidine_TilS_N"/>
    <property type="match status" value="1"/>
</dbReference>
<dbReference type="PANTHER" id="PTHR43033">
    <property type="entry name" value="TRNA(ILE)-LYSIDINE SYNTHASE-RELATED"/>
    <property type="match status" value="1"/>
</dbReference>
<dbReference type="PANTHER" id="PTHR43033:SF1">
    <property type="entry name" value="TRNA(ILE)-LYSIDINE SYNTHASE-RELATED"/>
    <property type="match status" value="1"/>
</dbReference>
<dbReference type="Pfam" id="PF01171">
    <property type="entry name" value="ATP_bind_3"/>
    <property type="match status" value="1"/>
</dbReference>
<dbReference type="Pfam" id="PF09179">
    <property type="entry name" value="TilS"/>
    <property type="match status" value="1"/>
</dbReference>
<dbReference type="Pfam" id="PF11734">
    <property type="entry name" value="TilS_C"/>
    <property type="match status" value="1"/>
</dbReference>
<dbReference type="SMART" id="SM00977">
    <property type="entry name" value="TilS_C"/>
    <property type="match status" value="1"/>
</dbReference>
<dbReference type="SUPFAM" id="SSF52402">
    <property type="entry name" value="Adenine nucleotide alpha hydrolases-like"/>
    <property type="match status" value="1"/>
</dbReference>
<dbReference type="SUPFAM" id="SSF82829">
    <property type="entry name" value="MesJ substrate recognition domain-like"/>
    <property type="match status" value="1"/>
</dbReference>
<dbReference type="SUPFAM" id="SSF56037">
    <property type="entry name" value="PheT/TilS domain"/>
    <property type="match status" value="1"/>
</dbReference>
<protein>
    <recommendedName>
        <fullName evidence="1">tRNA(Ile)-lysidine synthase</fullName>
        <ecNumber evidence="1">6.3.4.19</ecNumber>
    </recommendedName>
    <alternativeName>
        <fullName evidence="1">tRNA(Ile)-2-lysyl-cytidine synthase</fullName>
    </alternativeName>
    <alternativeName>
        <fullName evidence="1">tRNA(Ile)-lysidine synthetase</fullName>
    </alternativeName>
</protein>
<organism>
    <name type="scientific">Legionella pneumophila subsp. pneumophila (strain Philadelphia 1 / ATCC 33152 / DSM 7513)</name>
    <dbReference type="NCBI Taxonomy" id="272624"/>
    <lineage>
        <taxon>Bacteria</taxon>
        <taxon>Pseudomonadati</taxon>
        <taxon>Pseudomonadota</taxon>
        <taxon>Gammaproteobacteria</taxon>
        <taxon>Legionellales</taxon>
        <taxon>Legionellaceae</taxon>
        <taxon>Legionella</taxon>
    </lineage>
</organism>
<feature type="chain" id="PRO_0000181711" description="tRNA(Ile)-lysidine synthase">
    <location>
        <begin position="1"/>
        <end position="433"/>
    </location>
</feature>
<feature type="binding site" evidence="1">
    <location>
        <begin position="27"/>
        <end position="32"/>
    </location>
    <ligand>
        <name>ATP</name>
        <dbReference type="ChEBI" id="CHEBI:30616"/>
    </ligand>
</feature>
<reference key="1">
    <citation type="journal article" date="2004" name="Science">
        <title>The genomic sequence of the accidental pathogen Legionella pneumophila.</title>
        <authorList>
            <person name="Chien M."/>
            <person name="Morozova I."/>
            <person name="Shi S."/>
            <person name="Sheng H."/>
            <person name="Chen J."/>
            <person name="Gomez S.M."/>
            <person name="Asamani G."/>
            <person name="Hill K."/>
            <person name="Nuara J."/>
            <person name="Feder M."/>
            <person name="Rineer J."/>
            <person name="Greenberg J.J."/>
            <person name="Steshenko V."/>
            <person name="Park S.H."/>
            <person name="Zhao B."/>
            <person name="Teplitskaya E."/>
            <person name="Edwards J.R."/>
            <person name="Pampou S."/>
            <person name="Georghiou A."/>
            <person name="Chou I.-C."/>
            <person name="Iannuccilli W."/>
            <person name="Ulz M.E."/>
            <person name="Kim D.H."/>
            <person name="Geringer-Sameth A."/>
            <person name="Goldsberry C."/>
            <person name="Morozov P."/>
            <person name="Fischer S.G."/>
            <person name="Segal G."/>
            <person name="Qu X."/>
            <person name="Rzhetsky A."/>
            <person name="Zhang P."/>
            <person name="Cayanis E."/>
            <person name="De Jong P.J."/>
            <person name="Ju J."/>
            <person name="Kalachikov S."/>
            <person name="Shuman H.A."/>
            <person name="Russo J.J."/>
        </authorList>
    </citation>
    <scope>NUCLEOTIDE SEQUENCE [LARGE SCALE GENOMIC DNA]</scope>
    <source>
        <strain>Philadelphia 1 / ATCC 33152 / DSM 7513</strain>
    </source>
</reference>
<comment type="function">
    <text evidence="1">Ligates lysine onto the cytidine present at position 34 of the AUA codon-specific tRNA(Ile) that contains the anticodon CAU, in an ATP-dependent manner. Cytidine is converted to lysidine, thus changing the amino acid specificity of the tRNA from methionine to isoleucine.</text>
</comment>
<comment type="catalytic activity">
    <reaction evidence="1">
        <text>cytidine(34) in tRNA(Ile2) + L-lysine + ATP = lysidine(34) in tRNA(Ile2) + AMP + diphosphate + H(+)</text>
        <dbReference type="Rhea" id="RHEA:43744"/>
        <dbReference type="Rhea" id="RHEA-COMP:10625"/>
        <dbReference type="Rhea" id="RHEA-COMP:10670"/>
        <dbReference type="ChEBI" id="CHEBI:15378"/>
        <dbReference type="ChEBI" id="CHEBI:30616"/>
        <dbReference type="ChEBI" id="CHEBI:32551"/>
        <dbReference type="ChEBI" id="CHEBI:33019"/>
        <dbReference type="ChEBI" id="CHEBI:82748"/>
        <dbReference type="ChEBI" id="CHEBI:83665"/>
        <dbReference type="ChEBI" id="CHEBI:456215"/>
        <dbReference type="EC" id="6.3.4.19"/>
    </reaction>
</comment>
<comment type="subcellular location">
    <subcellularLocation>
        <location evidence="1">Cytoplasm</location>
    </subcellularLocation>
</comment>
<comment type="domain">
    <text>The N-terminal region contains the highly conserved SGGXDS motif, predicted to be a P-loop motif involved in ATP binding.</text>
</comment>
<comment type="similarity">
    <text evidence="1">Belongs to the tRNA(Ile)-lysidine synthase family.</text>
</comment>
<name>TILS_LEGPH</name>
<accession>Q5ZXE5</accession>
<gene>
    <name evidence="1" type="primary">tilS</name>
    <name type="ordered locus">lpg0786</name>
</gene>
<proteinExistence type="inferred from homology"/>
<evidence type="ECO:0000255" key="1">
    <source>
        <dbReference type="HAMAP-Rule" id="MF_01161"/>
    </source>
</evidence>
<sequence>MLVTRPLLSPEWVARLKQFKKLIVGFSGGLDSTVLLHVLASTPPLSNQLLAVHINHGISGNSLNWQRHCEQLCLDLGIAFIAKAIEFDRSANVEEAARNARYDFFSSLLEDNDCLVLGHHLDDQAETVLLQLFRGAGVDGLAAMQECSNLGAGQLARPFLTCPRVELEHYARIHELKWIEDESNQDTKYSRNYLRHRVMPLLLEKWPGVAGNISRAATHCQQAKANLEVLAIKDCPDLLNATDHLLIEPIKGLEFERITNVLKFWLKKNRIQLPSSKTFHRIIHEIIFAKLDAMPTVSWNQIQVRRFQQHLYLLKADQINLPKAIKWQQFPASLTYPDADIKLSAVKAQKGLMIPKDAQIEIRFRKGGEEIYWHGQTKHLKKLFQEWQIPPWVRDRVPLVYINDQLACVVGYAVSDLFFTTNPLEAWSIVNNS</sequence>
<keyword id="KW-0067">ATP-binding</keyword>
<keyword id="KW-0963">Cytoplasm</keyword>
<keyword id="KW-0436">Ligase</keyword>
<keyword id="KW-0547">Nucleotide-binding</keyword>
<keyword id="KW-1185">Reference proteome</keyword>
<keyword id="KW-0819">tRNA processing</keyword>